<accession>P33253</accession>
<protein>
    <recommendedName>
        <fullName evidence="1">ATP synthase subunit beta</fullName>
        <ecNumber evidence="1">7.1.2.2</ecNumber>
    </recommendedName>
    <alternativeName>
        <fullName evidence="1">ATP synthase F1 sector subunit beta</fullName>
    </alternativeName>
    <alternativeName>
        <fullName evidence="1">F-ATPase subunit beta</fullName>
    </alternativeName>
</protein>
<gene>
    <name evidence="1" type="primary">atpD</name>
    <name type="ordered locus">MYCGA3060</name>
    <name type="ORF">MGA_1177</name>
</gene>
<evidence type="ECO:0000255" key="1">
    <source>
        <dbReference type="HAMAP-Rule" id="MF_01347"/>
    </source>
</evidence>
<dbReference type="EC" id="7.1.2.2" evidence="1"/>
<dbReference type="EMBL" id="X64256">
    <property type="protein sequence ID" value="CAA45551.1"/>
    <property type="molecule type" value="Genomic_DNA"/>
</dbReference>
<dbReference type="EMBL" id="AE015450">
    <property type="protein sequence ID" value="AAP56656.1"/>
    <property type="molecule type" value="Genomic_DNA"/>
</dbReference>
<dbReference type="PIR" id="S24339">
    <property type="entry name" value="S24339"/>
</dbReference>
<dbReference type="RefSeq" id="WP_011113547.1">
    <property type="nucleotide sequence ID" value="NC_004829.2"/>
</dbReference>
<dbReference type="SMR" id="P33253"/>
<dbReference type="GeneID" id="93510134"/>
<dbReference type="KEGG" id="mga:MGA_1177"/>
<dbReference type="HOGENOM" id="CLU_022398_0_2_14"/>
<dbReference type="OrthoDB" id="9801639at2"/>
<dbReference type="Proteomes" id="UP000001418">
    <property type="component" value="Chromosome"/>
</dbReference>
<dbReference type="GO" id="GO:0005886">
    <property type="term" value="C:plasma membrane"/>
    <property type="evidence" value="ECO:0007669"/>
    <property type="project" value="UniProtKB-SubCell"/>
</dbReference>
<dbReference type="GO" id="GO:0045259">
    <property type="term" value="C:proton-transporting ATP synthase complex"/>
    <property type="evidence" value="ECO:0007669"/>
    <property type="project" value="UniProtKB-KW"/>
</dbReference>
<dbReference type="GO" id="GO:0005524">
    <property type="term" value="F:ATP binding"/>
    <property type="evidence" value="ECO:0007669"/>
    <property type="project" value="UniProtKB-UniRule"/>
</dbReference>
<dbReference type="GO" id="GO:0016887">
    <property type="term" value="F:ATP hydrolysis activity"/>
    <property type="evidence" value="ECO:0007669"/>
    <property type="project" value="InterPro"/>
</dbReference>
<dbReference type="GO" id="GO:0046933">
    <property type="term" value="F:proton-transporting ATP synthase activity, rotational mechanism"/>
    <property type="evidence" value="ECO:0007669"/>
    <property type="project" value="UniProtKB-UniRule"/>
</dbReference>
<dbReference type="CDD" id="cd18110">
    <property type="entry name" value="ATP-synt_F1_beta_C"/>
    <property type="match status" value="1"/>
</dbReference>
<dbReference type="CDD" id="cd18115">
    <property type="entry name" value="ATP-synt_F1_beta_N"/>
    <property type="match status" value="1"/>
</dbReference>
<dbReference type="CDD" id="cd01133">
    <property type="entry name" value="F1-ATPase_beta_CD"/>
    <property type="match status" value="1"/>
</dbReference>
<dbReference type="FunFam" id="1.10.1140.10:FF:000001">
    <property type="entry name" value="ATP synthase subunit beta"/>
    <property type="match status" value="1"/>
</dbReference>
<dbReference type="FunFam" id="3.40.50.300:FF:000004">
    <property type="entry name" value="ATP synthase subunit beta"/>
    <property type="match status" value="1"/>
</dbReference>
<dbReference type="Gene3D" id="2.40.10.170">
    <property type="match status" value="1"/>
</dbReference>
<dbReference type="Gene3D" id="1.10.1140.10">
    <property type="entry name" value="Bovine Mitochondrial F1-atpase, Atp Synthase Beta Chain, Chain D, domain 3"/>
    <property type="match status" value="1"/>
</dbReference>
<dbReference type="Gene3D" id="3.40.50.300">
    <property type="entry name" value="P-loop containing nucleotide triphosphate hydrolases"/>
    <property type="match status" value="1"/>
</dbReference>
<dbReference type="HAMAP" id="MF_01347">
    <property type="entry name" value="ATP_synth_beta_bact"/>
    <property type="match status" value="1"/>
</dbReference>
<dbReference type="InterPro" id="IPR003593">
    <property type="entry name" value="AAA+_ATPase"/>
</dbReference>
<dbReference type="InterPro" id="IPR055190">
    <property type="entry name" value="ATP-synt_VA_C"/>
</dbReference>
<dbReference type="InterPro" id="IPR005722">
    <property type="entry name" value="ATP_synth_F1_bsu"/>
</dbReference>
<dbReference type="InterPro" id="IPR020003">
    <property type="entry name" value="ATPase_a/bsu_AS"/>
</dbReference>
<dbReference type="InterPro" id="IPR050053">
    <property type="entry name" value="ATPase_alpha/beta_chains"/>
</dbReference>
<dbReference type="InterPro" id="IPR004100">
    <property type="entry name" value="ATPase_F1/V1/A1_a/bsu_N"/>
</dbReference>
<dbReference type="InterPro" id="IPR036121">
    <property type="entry name" value="ATPase_F1/V1/A1_a/bsu_N_sf"/>
</dbReference>
<dbReference type="InterPro" id="IPR000194">
    <property type="entry name" value="ATPase_F1/V1/A1_a/bsu_nucl-bd"/>
</dbReference>
<dbReference type="InterPro" id="IPR024034">
    <property type="entry name" value="ATPase_F1/V1_b/a_C"/>
</dbReference>
<dbReference type="InterPro" id="IPR027417">
    <property type="entry name" value="P-loop_NTPase"/>
</dbReference>
<dbReference type="NCBIfam" id="TIGR01039">
    <property type="entry name" value="atpD"/>
    <property type="match status" value="1"/>
</dbReference>
<dbReference type="PANTHER" id="PTHR15184">
    <property type="entry name" value="ATP SYNTHASE"/>
    <property type="match status" value="1"/>
</dbReference>
<dbReference type="PANTHER" id="PTHR15184:SF71">
    <property type="entry name" value="ATP SYNTHASE SUBUNIT BETA, MITOCHONDRIAL"/>
    <property type="match status" value="1"/>
</dbReference>
<dbReference type="Pfam" id="PF00006">
    <property type="entry name" value="ATP-synt_ab"/>
    <property type="match status" value="1"/>
</dbReference>
<dbReference type="Pfam" id="PF02874">
    <property type="entry name" value="ATP-synt_ab_N"/>
    <property type="match status" value="1"/>
</dbReference>
<dbReference type="Pfam" id="PF22919">
    <property type="entry name" value="ATP-synt_VA_C"/>
    <property type="match status" value="1"/>
</dbReference>
<dbReference type="SMART" id="SM00382">
    <property type="entry name" value="AAA"/>
    <property type="match status" value="1"/>
</dbReference>
<dbReference type="SUPFAM" id="SSF47917">
    <property type="entry name" value="C-terminal domain of alpha and beta subunits of F1 ATP synthase"/>
    <property type="match status" value="1"/>
</dbReference>
<dbReference type="SUPFAM" id="SSF50615">
    <property type="entry name" value="N-terminal domain of alpha and beta subunits of F1 ATP synthase"/>
    <property type="match status" value="1"/>
</dbReference>
<dbReference type="SUPFAM" id="SSF52540">
    <property type="entry name" value="P-loop containing nucleoside triphosphate hydrolases"/>
    <property type="match status" value="1"/>
</dbReference>
<dbReference type="PROSITE" id="PS00152">
    <property type="entry name" value="ATPASE_ALPHA_BETA"/>
    <property type="match status" value="1"/>
</dbReference>
<feature type="chain" id="PRO_0000144450" description="ATP synthase subunit beta">
    <location>
        <begin position="1"/>
        <end position="471"/>
    </location>
</feature>
<feature type="binding site" evidence="1">
    <location>
        <begin position="156"/>
        <end position="163"/>
    </location>
    <ligand>
        <name>ATP</name>
        <dbReference type="ChEBI" id="CHEBI:30616"/>
    </ligand>
</feature>
<organism>
    <name type="scientific">Mycoplasmoides gallisepticum (strain R(low / passage 15 / clone 2))</name>
    <name type="common">Mycoplasma gallisepticum</name>
    <dbReference type="NCBI Taxonomy" id="710127"/>
    <lineage>
        <taxon>Bacteria</taxon>
        <taxon>Bacillati</taxon>
        <taxon>Mycoplasmatota</taxon>
        <taxon>Mycoplasmoidales</taxon>
        <taxon>Mycoplasmoidaceae</taxon>
        <taxon>Mycoplasmoides</taxon>
    </lineage>
</organism>
<keyword id="KW-0066">ATP synthesis</keyword>
<keyword id="KW-0067">ATP-binding</keyword>
<keyword id="KW-1003">Cell membrane</keyword>
<keyword id="KW-0139">CF(1)</keyword>
<keyword id="KW-0375">Hydrogen ion transport</keyword>
<keyword id="KW-0406">Ion transport</keyword>
<keyword id="KW-0472">Membrane</keyword>
<keyword id="KW-0547">Nucleotide-binding</keyword>
<keyword id="KW-1185">Reference proteome</keyword>
<keyword id="KW-1278">Translocase</keyword>
<keyword id="KW-0813">Transport</keyword>
<sequence>MNTKYSYGKVYQVVGPVVDVVFEKQDDLPKIYDCLIIDEPNMKLHLEVAQLIGDDIARCIAMGPTEGLARNVKVTSTNQPISVPVGTEVLGRMFNVIGEPIDEKKPIDASVKRMSIHRPAPSFADQSNELEIFETGIKVIDLLIPYAKGGKIGLFGGAGVGKTVLVQELIHNIATGHGGLSVFAGVGERTREGNDLYYEMIEGGVIDKTALVFGQMNEPPGARMRVALTGLTMAEYFRDVNNQDVLLFIDNIFRFTQAGSEVSALLGRMPSAVGYQPTLAEEMGSLQERITSTKSGSITSVQAIYVPADDLTDPAPSTTFTHLDAKTVLDRNIASLGIFPAVNPLDSTSRLLDPSVVGIQHYQTARKVQMILQKFLELQDIIAILGIDELSEEDKLTVSRARKIRNFLSQPFFVAEKFSGNKGKYVPISETIKGFSEIVEGKHDDLPEQAFFYVGSIDEAIERAKTLTRNG</sequence>
<reference key="1">
    <citation type="journal article" date="1992" name="Biochem. J.">
        <title>Nucleotide sequence, organization and characterization of the atp genes and the encoded subunits of Mycoplasma gallisepticum ATPase.</title>
        <authorList>
            <person name="Rasmussen O.F."/>
            <person name="Shirvan M.H."/>
            <person name="Margalit H."/>
            <person name="Christiansen C."/>
            <person name="Rottem S."/>
        </authorList>
    </citation>
    <scope>NUCLEOTIDE SEQUENCE [GENOMIC DNA]</scope>
    <source>
        <strain>A5969Var.B</strain>
    </source>
</reference>
<reference key="2">
    <citation type="journal article" date="2003" name="Microbiology">
        <title>The complete genome sequence of the avian pathogen Mycoplasma gallisepticum strain R(low).</title>
        <authorList>
            <person name="Papazisi L."/>
            <person name="Gorton T.S."/>
            <person name="Kutish G."/>
            <person name="Markham P.F."/>
            <person name="Browning G.F."/>
            <person name="Nguyen D.K."/>
            <person name="Swartzell S."/>
            <person name="Madan A."/>
            <person name="Mahairas G."/>
            <person name="Geary S.J."/>
        </authorList>
    </citation>
    <scope>NUCLEOTIDE SEQUENCE [LARGE SCALE GENOMIC DNA]</scope>
    <source>
        <strain>R(low / passage 15 / clone 2)</strain>
    </source>
</reference>
<name>ATPB_MYCGA</name>
<comment type="function">
    <text evidence="1">Produces ATP from ADP in the presence of a proton gradient across the membrane. The catalytic sites are hosted primarily by the beta subunits.</text>
</comment>
<comment type="catalytic activity">
    <reaction evidence="1">
        <text>ATP + H2O + 4 H(+)(in) = ADP + phosphate + 5 H(+)(out)</text>
        <dbReference type="Rhea" id="RHEA:57720"/>
        <dbReference type="ChEBI" id="CHEBI:15377"/>
        <dbReference type="ChEBI" id="CHEBI:15378"/>
        <dbReference type="ChEBI" id="CHEBI:30616"/>
        <dbReference type="ChEBI" id="CHEBI:43474"/>
        <dbReference type="ChEBI" id="CHEBI:456216"/>
        <dbReference type="EC" id="7.1.2.2"/>
    </reaction>
</comment>
<comment type="subunit">
    <text evidence="1">F-type ATPases have 2 components, CF(1) - the catalytic core - and CF(0) - the membrane proton channel. CF(1) has five subunits: alpha(3), beta(3), gamma(1), delta(1), epsilon(1). CF(0) has three main subunits: a(1), b(2) and c(9-12). The alpha and beta chains form an alternating ring which encloses part of the gamma chain. CF(1) is attached to CF(0) by a central stalk formed by the gamma and epsilon chains, while a peripheral stalk is formed by the delta and b chains.</text>
</comment>
<comment type="subcellular location">
    <subcellularLocation>
        <location evidence="1">Cell membrane</location>
        <topology evidence="1">Peripheral membrane protein</topology>
    </subcellularLocation>
</comment>
<comment type="similarity">
    <text evidence="1">Belongs to the ATPase alpha/beta chains family.</text>
</comment>
<proteinExistence type="inferred from homology"/>